<sequence>MNLEKLSKPELLTLFSILEGELEARDLVIEALKAQHRDTFIEERYGKYNISDPLMALQRDFETLKEKNDGEKQPVCTNPLSILKVVMKQCKNMQERMLSQLAAAESRHRKVILDLEEERQRHAQDTAEGDDVTYMLEKERERLTQQLEFEKSQVKKFEKEQKKLSSQLEEERSRHKQLSSMLVLECKKATNKAAEEGQKAGELSLKLEKEKSRVSKLEEELAAERKRGLQTEAQVEKQLSEFDIEREQLRAKLNREENRTKTLKEEMESLKKIVKDLEASHQHSSPNEQLKKPVTVSKGTATEPLMLMSVFCQTESFPAERTHGSNIAKMTNTGLPGPATPAYSYAKTNGHCDPEIQTTRELTAGNNVENQVPPREKSVALAQEKPVENGGCPVGIETPVPMPSPLSSSGSSLSPSSTASSSLTSSPCSSPVLTKRLLGSSASSPGYQSSYQVGINQRFHAARHKFQSQADQDQQASGLQSPPSRDLSPTLIDNSAAKQLARNTVTQVLSRFTSQQGPIKPVSPNSSPFGTDYRNLANTANPRGDTSHSPTPGKVSSPLSPLSPGIKSPTIPRAERGNPPPIPPKKPGLTPSPSATTPLTKTHSQAASLTTAEDLASSCSSNTVVANGKDVELLLPTSS</sequence>
<comment type="function">
    <text evidence="1 5">Regulates lamellipodial actin dynamics in a CTTN-dependent manner (By similarity). Associates with core striatin-interacting phosphatase and kinase (STRIPAK) complex to form CTTNBP2NL-STRIPAK complexes. STRIPAK complexes have critical roles in protein (de)phosphorylation and are regulators of multiple signaling pathways including Hippo, MAPK, nuclear receptor and cytoskeleton remodeling. Different types of STRIPAK complexes are involved in a variety of biological processes such as cell growth, differentiation, apoptosis, metabolism and immune regulation (PubMed:18782753).</text>
</comment>
<comment type="subunit">
    <text evidence="1 5">Interacts with CTTN/cortactin; this interaction may redistribute CTTN to stress fibers (By similarity). May form homomers. Associates with the core of STRIPAK complexes composed of PP2A catalytic and scaffolding subunits, the striatins (PP2A regulatory subunits), the striatin-associated proteins MOB4, STRIP1 and STRIP2, PDCD10 and members of the STE20 kinases, such as STK24 and STK26 (PubMed:18782753).</text>
</comment>
<comment type="interaction">
    <interactant intactId="EBI-1774273">
        <id>Q9P2B4</id>
    </interactant>
    <interactant intactId="EBI-740220">
        <id>O14964</id>
        <label>HGS</label>
    </interactant>
    <organismsDiffer>false</organismsDiffer>
    <experiments>3</experiments>
</comment>
<comment type="interaction">
    <interactant intactId="EBI-1774273">
        <id>Q9P2B4</id>
    </interactant>
    <interactant intactId="EBI-7116203">
        <id>O75031</id>
        <label>HSF2BP</label>
    </interactant>
    <organismsDiffer>false</organismsDiffer>
    <experiments>3</experiments>
</comment>
<comment type="interaction">
    <interactant intactId="EBI-1774273">
        <id>Q9P2B4</id>
    </interactant>
    <interactant intactId="EBI-713935">
        <id>Q9Y3A3</id>
        <label>MOB4</label>
    </interactant>
    <organismsDiffer>false</organismsDiffer>
    <experiments>6</experiments>
</comment>
<comment type="interaction">
    <interactant intactId="EBI-1774273">
        <id>Q9P2B4</id>
    </interactant>
    <interactant intactId="EBI-2692890">
        <id>Q96KN3</id>
        <label>PKNOX2</label>
    </interactant>
    <organismsDiffer>false</organismsDiffer>
    <experiments>3</experiments>
</comment>
<comment type="interaction">
    <interactant intactId="EBI-1774273">
        <id>Q9P2B4</id>
    </interactant>
    <interactant intactId="EBI-740175">
        <id>Q9Y6E0</id>
        <label>STK24</label>
    </interactant>
    <organismsDiffer>false</organismsDiffer>
    <experiments>5</experiments>
</comment>
<comment type="interaction">
    <interactant intactId="EBI-1774273">
        <id>Q9P2B4</id>
    </interactant>
    <interactant intactId="EBI-618239">
        <id>Q9P289</id>
        <label>STK26</label>
    </interactant>
    <organismsDiffer>false</organismsDiffer>
    <experiments>6</experiments>
</comment>
<comment type="interaction">
    <interactant intactId="EBI-1774273">
        <id>Q9P2B4</id>
    </interactant>
    <interactant intactId="EBI-1773588">
        <id>Q5VSL9</id>
        <label>STRIP1</label>
    </interactant>
    <organismsDiffer>false</organismsDiffer>
    <experiments>6</experiments>
</comment>
<comment type="interaction">
    <interactant intactId="EBI-1774273">
        <id>Q9P2B4</id>
    </interactant>
    <interactant intactId="EBI-1046642">
        <id>O43815</id>
        <label>STRN</label>
    </interactant>
    <organismsDiffer>false</organismsDiffer>
    <experiments>8</experiments>
</comment>
<comment type="interaction">
    <interactant intactId="EBI-1774273">
        <id>Q9P2B4</id>
    </interactant>
    <interactant intactId="EBI-1053857">
        <id>Q13033</id>
        <label>STRN3</label>
    </interactant>
    <organismsDiffer>false</organismsDiffer>
    <experiments>10</experiments>
</comment>
<comment type="interaction">
    <interactant intactId="EBI-1774273">
        <id>Q9P2B4</id>
    </interactant>
    <interactant intactId="EBI-739895">
        <id>Q8N6Y0</id>
        <label>USHBP1</label>
    </interactant>
    <organismsDiffer>false</organismsDiffer>
    <experiments>3</experiments>
</comment>
<comment type="subcellular location">
    <subcellularLocation>
        <location evidence="1">Cell projection</location>
        <location evidence="1">Lamellipodium</location>
    </subcellularLocation>
    <subcellularLocation>
        <location evidence="2">Cytoplasm</location>
        <location evidence="2">Cytoskeleton</location>
        <location evidence="2">Stress fiber</location>
    </subcellularLocation>
</comment>
<comment type="sequence caution" evidence="6">
    <conflict type="erroneous initiation">
        <sequence resource="EMBL-CDS" id="BAA92671"/>
    </conflict>
    <text>Extended N-terminus.</text>
</comment>
<reference key="1">
    <citation type="journal article" date="2000" name="DNA Res.">
        <title>Prediction of the coding sequences of unidentified human genes. XVI. The complete sequences of 150 new cDNA clones from brain which code for large proteins in vitro.</title>
        <authorList>
            <person name="Nagase T."/>
            <person name="Kikuno R."/>
            <person name="Ishikawa K."/>
            <person name="Hirosawa M."/>
            <person name="Ohara O."/>
        </authorList>
    </citation>
    <scope>NUCLEOTIDE SEQUENCE [LARGE SCALE MRNA]</scope>
    <source>
        <tissue>Brain</tissue>
    </source>
</reference>
<reference key="2">
    <citation type="journal article" date="2004" name="Nat. Genet.">
        <title>Complete sequencing and characterization of 21,243 full-length human cDNAs.</title>
        <authorList>
            <person name="Ota T."/>
            <person name="Suzuki Y."/>
            <person name="Nishikawa T."/>
            <person name="Otsuki T."/>
            <person name="Sugiyama T."/>
            <person name="Irie R."/>
            <person name="Wakamatsu A."/>
            <person name="Hayashi K."/>
            <person name="Sato H."/>
            <person name="Nagai K."/>
            <person name="Kimura K."/>
            <person name="Makita H."/>
            <person name="Sekine M."/>
            <person name="Obayashi M."/>
            <person name="Nishi T."/>
            <person name="Shibahara T."/>
            <person name="Tanaka T."/>
            <person name="Ishii S."/>
            <person name="Yamamoto J."/>
            <person name="Saito K."/>
            <person name="Kawai Y."/>
            <person name="Isono Y."/>
            <person name="Nakamura Y."/>
            <person name="Nagahari K."/>
            <person name="Murakami K."/>
            <person name="Yasuda T."/>
            <person name="Iwayanagi T."/>
            <person name="Wagatsuma M."/>
            <person name="Shiratori A."/>
            <person name="Sudo H."/>
            <person name="Hosoiri T."/>
            <person name="Kaku Y."/>
            <person name="Kodaira H."/>
            <person name="Kondo H."/>
            <person name="Sugawara M."/>
            <person name="Takahashi M."/>
            <person name="Kanda K."/>
            <person name="Yokoi T."/>
            <person name="Furuya T."/>
            <person name="Kikkawa E."/>
            <person name="Omura Y."/>
            <person name="Abe K."/>
            <person name="Kamihara K."/>
            <person name="Katsuta N."/>
            <person name="Sato K."/>
            <person name="Tanikawa M."/>
            <person name="Yamazaki M."/>
            <person name="Ninomiya K."/>
            <person name="Ishibashi T."/>
            <person name="Yamashita H."/>
            <person name="Murakawa K."/>
            <person name="Fujimori K."/>
            <person name="Tanai H."/>
            <person name="Kimata M."/>
            <person name="Watanabe M."/>
            <person name="Hiraoka S."/>
            <person name="Chiba Y."/>
            <person name="Ishida S."/>
            <person name="Ono Y."/>
            <person name="Takiguchi S."/>
            <person name="Watanabe S."/>
            <person name="Yosida M."/>
            <person name="Hotuta T."/>
            <person name="Kusano J."/>
            <person name="Kanehori K."/>
            <person name="Takahashi-Fujii A."/>
            <person name="Hara H."/>
            <person name="Tanase T.-O."/>
            <person name="Nomura Y."/>
            <person name="Togiya S."/>
            <person name="Komai F."/>
            <person name="Hara R."/>
            <person name="Takeuchi K."/>
            <person name="Arita M."/>
            <person name="Imose N."/>
            <person name="Musashino K."/>
            <person name="Yuuki H."/>
            <person name="Oshima A."/>
            <person name="Sasaki N."/>
            <person name="Aotsuka S."/>
            <person name="Yoshikawa Y."/>
            <person name="Matsunawa H."/>
            <person name="Ichihara T."/>
            <person name="Shiohata N."/>
            <person name="Sano S."/>
            <person name="Moriya S."/>
            <person name="Momiyama H."/>
            <person name="Satoh N."/>
            <person name="Takami S."/>
            <person name="Terashima Y."/>
            <person name="Suzuki O."/>
            <person name="Nakagawa S."/>
            <person name="Senoh A."/>
            <person name="Mizoguchi H."/>
            <person name="Goto Y."/>
            <person name="Shimizu F."/>
            <person name="Wakebe H."/>
            <person name="Hishigaki H."/>
            <person name="Watanabe T."/>
            <person name="Sugiyama A."/>
            <person name="Takemoto M."/>
            <person name="Kawakami B."/>
            <person name="Yamazaki M."/>
            <person name="Watanabe K."/>
            <person name="Kumagai A."/>
            <person name="Itakura S."/>
            <person name="Fukuzumi Y."/>
            <person name="Fujimori Y."/>
            <person name="Komiyama M."/>
            <person name="Tashiro H."/>
            <person name="Tanigami A."/>
            <person name="Fujiwara T."/>
            <person name="Ono T."/>
            <person name="Yamada K."/>
            <person name="Fujii Y."/>
            <person name="Ozaki K."/>
            <person name="Hirao M."/>
            <person name="Ohmori Y."/>
            <person name="Kawabata A."/>
            <person name="Hikiji T."/>
            <person name="Kobatake N."/>
            <person name="Inagaki H."/>
            <person name="Ikema Y."/>
            <person name="Okamoto S."/>
            <person name="Okitani R."/>
            <person name="Kawakami T."/>
            <person name="Noguchi S."/>
            <person name="Itoh T."/>
            <person name="Shigeta K."/>
            <person name="Senba T."/>
            <person name="Matsumura K."/>
            <person name="Nakajima Y."/>
            <person name="Mizuno T."/>
            <person name="Morinaga M."/>
            <person name="Sasaki M."/>
            <person name="Togashi T."/>
            <person name="Oyama M."/>
            <person name="Hata H."/>
            <person name="Watanabe M."/>
            <person name="Komatsu T."/>
            <person name="Mizushima-Sugano J."/>
            <person name="Satoh T."/>
            <person name="Shirai Y."/>
            <person name="Takahashi Y."/>
            <person name="Nakagawa K."/>
            <person name="Okumura K."/>
            <person name="Nagase T."/>
            <person name="Nomura N."/>
            <person name="Kikuchi H."/>
            <person name="Masuho Y."/>
            <person name="Yamashita R."/>
            <person name="Nakai K."/>
            <person name="Yada T."/>
            <person name="Nakamura Y."/>
            <person name="Ohara O."/>
            <person name="Isogai T."/>
            <person name="Sugano S."/>
        </authorList>
    </citation>
    <scope>NUCLEOTIDE SEQUENCE [LARGE SCALE MRNA]</scope>
    <source>
        <tissue>Teratocarcinoma</tissue>
    </source>
</reference>
<reference key="3">
    <citation type="journal article" date="2006" name="Nature">
        <title>The DNA sequence and biological annotation of human chromosome 1.</title>
        <authorList>
            <person name="Gregory S.G."/>
            <person name="Barlow K.F."/>
            <person name="McLay K.E."/>
            <person name="Kaul R."/>
            <person name="Swarbreck D."/>
            <person name="Dunham A."/>
            <person name="Scott C.E."/>
            <person name="Howe K.L."/>
            <person name="Woodfine K."/>
            <person name="Spencer C.C.A."/>
            <person name="Jones M.C."/>
            <person name="Gillson C."/>
            <person name="Searle S."/>
            <person name="Zhou Y."/>
            <person name="Kokocinski F."/>
            <person name="McDonald L."/>
            <person name="Evans R."/>
            <person name="Phillips K."/>
            <person name="Atkinson A."/>
            <person name="Cooper R."/>
            <person name="Jones C."/>
            <person name="Hall R.E."/>
            <person name="Andrews T.D."/>
            <person name="Lloyd C."/>
            <person name="Ainscough R."/>
            <person name="Almeida J.P."/>
            <person name="Ambrose K.D."/>
            <person name="Anderson F."/>
            <person name="Andrew R.W."/>
            <person name="Ashwell R.I.S."/>
            <person name="Aubin K."/>
            <person name="Babbage A.K."/>
            <person name="Bagguley C.L."/>
            <person name="Bailey J."/>
            <person name="Beasley H."/>
            <person name="Bethel G."/>
            <person name="Bird C.P."/>
            <person name="Bray-Allen S."/>
            <person name="Brown J.Y."/>
            <person name="Brown A.J."/>
            <person name="Buckley D."/>
            <person name="Burton J."/>
            <person name="Bye J."/>
            <person name="Carder C."/>
            <person name="Chapman J.C."/>
            <person name="Clark S.Y."/>
            <person name="Clarke G."/>
            <person name="Clee C."/>
            <person name="Cobley V."/>
            <person name="Collier R.E."/>
            <person name="Corby N."/>
            <person name="Coville G.J."/>
            <person name="Davies J."/>
            <person name="Deadman R."/>
            <person name="Dunn M."/>
            <person name="Earthrowl M."/>
            <person name="Ellington A.G."/>
            <person name="Errington H."/>
            <person name="Frankish A."/>
            <person name="Frankland J."/>
            <person name="French L."/>
            <person name="Garner P."/>
            <person name="Garnett J."/>
            <person name="Gay L."/>
            <person name="Ghori M.R.J."/>
            <person name="Gibson R."/>
            <person name="Gilby L.M."/>
            <person name="Gillett W."/>
            <person name="Glithero R.J."/>
            <person name="Grafham D.V."/>
            <person name="Griffiths C."/>
            <person name="Griffiths-Jones S."/>
            <person name="Grocock R."/>
            <person name="Hammond S."/>
            <person name="Harrison E.S.I."/>
            <person name="Hart E."/>
            <person name="Haugen E."/>
            <person name="Heath P.D."/>
            <person name="Holmes S."/>
            <person name="Holt K."/>
            <person name="Howden P.J."/>
            <person name="Hunt A.R."/>
            <person name="Hunt S.E."/>
            <person name="Hunter G."/>
            <person name="Isherwood J."/>
            <person name="James R."/>
            <person name="Johnson C."/>
            <person name="Johnson D."/>
            <person name="Joy A."/>
            <person name="Kay M."/>
            <person name="Kershaw J.K."/>
            <person name="Kibukawa M."/>
            <person name="Kimberley A.M."/>
            <person name="King A."/>
            <person name="Knights A.J."/>
            <person name="Lad H."/>
            <person name="Laird G."/>
            <person name="Lawlor S."/>
            <person name="Leongamornlert D.A."/>
            <person name="Lloyd D.M."/>
            <person name="Loveland J."/>
            <person name="Lovell J."/>
            <person name="Lush M.J."/>
            <person name="Lyne R."/>
            <person name="Martin S."/>
            <person name="Mashreghi-Mohammadi M."/>
            <person name="Matthews L."/>
            <person name="Matthews N.S.W."/>
            <person name="McLaren S."/>
            <person name="Milne S."/>
            <person name="Mistry S."/>
            <person name="Moore M.J.F."/>
            <person name="Nickerson T."/>
            <person name="O'Dell C.N."/>
            <person name="Oliver K."/>
            <person name="Palmeiri A."/>
            <person name="Palmer S.A."/>
            <person name="Parker A."/>
            <person name="Patel D."/>
            <person name="Pearce A.V."/>
            <person name="Peck A.I."/>
            <person name="Pelan S."/>
            <person name="Phelps K."/>
            <person name="Phillimore B.J."/>
            <person name="Plumb R."/>
            <person name="Rajan J."/>
            <person name="Raymond C."/>
            <person name="Rouse G."/>
            <person name="Saenphimmachak C."/>
            <person name="Sehra H.K."/>
            <person name="Sheridan E."/>
            <person name="Shownkeen R."/>
            <person name="Sims S."/>
            <person name="Skuce C.D."/>
            <person name="Smith M."/>
            <person name="Steward C."/>
            <person name="Subramanian S."/>
            <person name="Sycamore N."/>
            <person name="Tracey A."/>
            <person name="Tromans A."/>
            <person name="Van Helmond Z."/>
            <person name="Wall M."/>
            <person name="Wallis J.M."/>
            <person name="White S."/>
            <person name="Whitehead S.L."/>
            <person name="Wilkinson J.E."/>
            <person name="Willey D.L."/>
            <person name="Williams H."/>
            <person name="Wilming L."/>
            <person name="Wray P.W."/>
            <person name="Wu Z."/>
            <person name="Coulson A."/>
            <person name="Vaudin M."/>
            <person name="Sulston J.E."/>
            <person name="Durbin R.M."/>
            <person name="Hubbard T."/>
            <person name="Wooster R."/>
            <person name="Dunham I."/>
            <person name="Carter N.P."/>
            <person name="McVean G."/>
            <person name="Ross M.T."/>
            <person name="Harrow J."/>
            <person name="Olson M.V."/>
            <person name="Beck S."/>
            <person name="Rogers J."/>
            <person name="Bentley D.R."/>
        </authorList>
    </citation>
    <scope>NUCLEOTIDE SEQUENCE [LARGE SCALE GENOMIC DNA]</scope>
</reference>
<reference key="4">
    <citation type="journal article" date="2004" name="Genome Res.">
        <title>The status, quality, and expansion of the NIH full-length cDNA project: the Mammalian Gene Collection (MGC).</title>
        <authorList>
            <consortium name="The MGC Project Team"/>
        </authorList>
    </citation>
    <scope>NUCLEOTIDE SEQUENCE [LARGE SCALE MRNA]</scope>
    <source>
        <tissue>Skin</tissue>
    </source>
</reference>
<reference key="5">
    <citation type="journal article" date="2006" name="Cell">
        <title>Global, in vivo, and site-specific phosphorylation dynamics in signaling networks.</title>
        <authorList>
            <person name="Olsen J.V."/>
            <person name="Blagoev B."/>
            <person name="Gnad F."/>
            <person name="Macek B."/>
            <person name="Kumar C."/>
            <person name="Mortensen P."/>
            <person name="Mann M."/>
        </authorList>
    </citation>
    <scope>PHOSPHORYLATION [LARGE SCALE ANALYSIS] AT SER-560</scope>
    <scope>IDENTIFICATION BY MASS SPECTROMETRY [LARGE SCALE ANALYSIS]</scope>
    <source>
        <tissue>Cervix carcinoma</tissue>
    </source>
</reference>
<reference key="6">
    <citation type="journal article" date="2006" name="Nat. Biotechnol.">
        <title>A probability-based approach for high-throughput protein phosphorylation analysis and site localization.</title>
        <authorList>
            <person name="Beausoleil S.A."/>
            <person name="Villen J."/>
            <person name="Gerber S.A."/>
            <person name="Rush J."/>
            <person name="Gygi S.P."/>
        </authorList>
    </citation>
    <scope>PHOSPHORYLATION [LARGE SCALE ANALYSIS] AT SER-488 AND SER-523</scope>
    <scope>IDENTIFICATION BY MASS SPECTROMETRY [LARGE SCALE ANALYSIS]</scope>
    <source>
        <tissue>Cervix carcinoma</tissue>
    </source>
</reference>
<reference key="7">
    <citation type="journal article" date="2008" name="Proc. Natl. Acad. Sci. U.S.A.">
        <title>A quantitative atlas of mitotic phosphorylation.</title>
        <authorList>
            <person name="Dephoure N."/>
            <person name="Zhou C."/>
            <person name="Villen J."/>
            <person name="Beausoleil S.A."/>
            <person name="Bakalarski C.E."/>
            <person name="Elledge S.J."/>
            <person name="Gygi S.P."/>
        </authorList>
    </citation>
    <scope>PHOSPHORYLATION [LARGE SCALE ANALYSIS] AT SER-481; SER-488; SER-523; SER-527 AND THR-590</scope>
    <scope>IDENTIFICATION BY MASS SPECTROMETRY [LARGE SCALE ANALYSIS]</scope>
    <source>
        <tissue>Cervix carcinoma</tissue>
    </source>
</reference>
<reference key="8">
    <citation type="journal article" date="2009" name="Anal. Chem.">
        <title>Lys-N and trypsin cover complementary parts of the phosphoproteome in a refined SCX-based approach.</title>
        <authorList>
            <person name="Gauci S."/>
            <person name="Helbig A.O."/>
            <person name="Slijper M."/>
            <person name="Krijgsveld J."/>
            <person name="Heck A.J."/>
            <person name="Mohammed S."/>
        </authorList>
    </citation>
    <scope>IDENTIFICATION BY MASS SPECTROMETRY [LARGE SCALE ANALYSIS]</scope>
</reference>
<reference key="9">
    <citation type="journal article" date="2009" name="Mol. Cell. Proteomics">
        <title>A PP2A phosphatase high density interaction network identifies a novel striatin-interacting phosphatase and kinase complex linked to the cerebral cavernous malformation 3 (CCM3) protein.</title>
        <authorList>
            <person name="Goudreault M."/>
            <person name="D'Ambrosio L.M."/>
            <person name="Kean M.J."/>
            <person name="Mullin M.J."/>
            <person name="Larsen B.G."/>
            <person name="Sanchez A."/>
            <person name="Chaudhry S."/>
            <person name="Chen G.I."/>
            <person name="Sicheri F."/>
            <person name="Nesvizhskii A.I."/>
            <person name="Aebersold R."/>
            <person name="Raught B."/>
            <person name="Gingras A.C."/>
        </authorList>
    </citation>
    <scope>INTERACTION WITH MOB4; PPP2R1A; PPP2CB; STK24; STK25; STK26; STRN4; STRIP1 AND STRIP2</scope>
    <scope>HOMOMERIZATION</scope>
    <scope>ASSOCIATION WITH STRIPAK COMPLEX</scope>
    <scope>FUNCTION</scope>
</reference>
<reference key="10">
    <citation type="journal article" date="2010" name="Sci. Signal.">
        <title>Quantitative phosphoproteomics reveals widespread full phosphorylation site occupancy during mitosis.</title>
        <authorList>
            <person name="Olsen J.V."/>
            <person name="Vermeulen M."/>
            <person name="Santamaria A."/>
            <person name="Kumar C."/>
            <person name="Miller M.L."/>
            <person name="Jensen L.J."/>
            <person name="Gnad F."/>
            <person name="Cox J."/>
            <person name="Jensen T.S."/>
            <person name="Nigg E.A."/>
            <person name="Brunak S."/>
            <person name="Mann M."/>
        </authorList>
    </citation>
    <scope>PHOSPHORYLATION [LARGE SCALE ANALYSIS] AT SER-488; SER-523; SER-560; SER-563; THR-590 AND SER-592</scope>
    <scope>IDENTIFICATION BY MASS SPECTROMETRY [LARGE SCALE ANALYSIS]</scope>
    <source>
        <tissue>Cervix carcinoma</tissue>
    </source>
</reference>
<reference key="11">
    <citation type="journal article" date="2011" name="BMC Syst. Biol.">
        <title>Initial characterization of the human central proteome.</title>
        <authorList>
            <person name="Burkard T.R."/>
            <person name="Planyavsky M."/>
            <person name="Kaupe I."/>
            <person name="Breitwieser F.P."/>
            <person name="Buerckstuemmer T."/>
            <person name="Bennett K.L."/>
            <person name="Superti-Furga G."/>
            <person name="Colinge J."/>
        </authorList>
    </citation>
    <scope>IDENTIFICATION BY MASS SPECTROMETRY [LARGE SCALE ANALYSIS]</scope>
</reference>
<reference key="12">
    <citation type="journal article" date="2011" name="Sci. Signal.">
        <title>System-wide temporal characterization of the proteome and phosphoproteome of human embryonic stem cell differentiation.</title>
        <authorList>
            <person name="Rigbolt K.T."/>
            <person name="Prokhorova T.A."/>
            <person name="Akimov V."/>
            <person name="Henningsen J."/>
            <person name="Johansen P.T."/>
            <person name="Kratchmarova I."/>
            <person name="Kassem M."/>
            <person name="Mann M."/>
            <person name="Olsen J.V."/>
            <person name="Blagoev B."/>
        </authorList>
    </citation>
    <scope>PHOSPHORYLATION [LARGE SCALE ANALYSIS] AT SER-488; SER-560; SER-563 AND THR-570</scope>
    <scope>IDENTIFICATION BY MASS SPECTROMETRY [LARGE SCALE ANALYSIS]</scope>
</reference>
<reference key="13">
    <citation type="journal article" date="2013" name="J. Proteome Res.">
        <title>Toward a comprehensive characterization of a human cancer cell phosphoproteome.</title>
        <authorList>
            <person name="Zhou H."/>
            <person name="Di Palma S."/>
            <person name="Preisinger C."/>
            <person name="Peng M."/>
            <person name="Polat A.N."/>
            <person name="Heck A.J."/>
            <person name="Mohammed S."/>
        </authorList>
    </citation>
    <scope>PHOSPHORYLATION [LARGE SCALE ANALYSIS] AT SER-284; SER-285; SER-481; SER-488; SER-523; SER-560; SER-563 AND SER-568</scope>
    <scope>IDENTIFICATION BY MASS SPECTROMETRY [LARGE SCALE ANALYSIS]</scope>
    <source>
        <tissue>Cervix carcinoma</tissue>
        <tissue>Erythroleukemia</tissue>
    </source>
</reference>
<proteinExistence type="evidence at protein level"/>
<evidence type="ECO:0000250" key="1">
    <source>
        <dbReference type="UniProtKB" id="Q8SX68"/>
    </source>
</evidence>
<evidence type="ECO:0000250" key="2">
    <source>
        <dbReference type="UniProtKB" id="Q99LJ0"/>
    </source>
</evidence>
<evidence type="ECO:0000255" key="3"/>
<evidence type="ECO:0000256" key="4">
    <source>
        <dbReference type="SAM" id="MobiDB-lite"/>
    </source>
</evidence>
<evidence type="ECO:0000269" key="5">
    <source>
    </source>
</evidence>
<evidence type="ECO:0000305" key="6"/>
<evidence type="ECO:0000312" key="7">
    <source>
        <dbReference type="HGNC" id="HGNC:25330"/>
    </source>
</evidence>
<evidence type="ECO:0007744" key="8">
    <source>
    </source>
</evidence>
<evidence type="ECO:0007744" key="9">
    <source>
    </source>
</evidence>
<evidence type="ECO:0007744" key="10">
    <source>
    </source>
</evidence>
<evidence type="ECO:0007744" key="11">
    <source>
    </source>
</evidence>
<evidence type="ECO:0007744" key="12">
    <source>
    </source>
</evidence>
<evidence type="ECO:0007744" key="13">
    <source>
    </source>
</evidence>
<accession>Q9P2B4</accession>
<accession>B3KMS5</accession>
<accession>Q96B40</accession>
<keyword id="KW-0966">Cell projection</keyword>
<keyword id="KW-0175">Coiled coil</keyword>
<keyword id="KW-0963">Cytoplasm</keyword>
<keyword id="KW-0206">Cytoskeleton</keyword>
<keyword id="KW-0597">Phosphoprotein</keyword>
<keyword id="KW-1267">Proteomics identification</keyword>
<keyword id="KW-1185">Reference proteome</keyword>
<name>CT2NL_HUMAN</name>
<gene>
    <name evidence="7" type="primary">CTTNBP2NL</name>
    <name type="synonym">KIAA1433</name>
</gene>
<organism>
    <name type="scientific">Homo sapiens</name>
    <name type="common">Human</name>
    <dbReference type="NCBI Taxonomy" id="9606"/>
    <lineage>
        <taxon>Eukaryota</taxon>
        <taxon>Metazoa</taxon>
        <taxon>Chordata</taxon>
        <taxon>Craniata</taxon>
        <taxon>Vertebrata</taxon>
        <taxon>Euteleostomi</taxon>
        <taxon>Mammalia</taxon>
        <taxon>Eutheria</taxon>
        <taxon>Euarchontoglires</taxon>
        <taxon>Primates</taxon>
        <taxon>Haplorrhini</taxon>
        <taxon>Catarrhini</taxon>
        <taxon>Hominidae</taxon>
        <taxon>Homo</taxon>
    </lineage>
</organism>
<dbReference type="EMBL" id="AB037854">
    <property type="protein sequence ID" value="BAA92671.1"/>
    <property type="status" value="ALT_INIT"/>
    <property type="molecule type" value="mRNA"/>
</dbReference>
<dbReference type="EMBL" id="AK022544">
    <property type="protein sequence ID" value="BAG51087.1"/>
    <property type="molecule type" value="mRNA"/>
</dbReference>
<dbReference type="EMBL" id="AL354760">
    <property type="status" value="NOT_ANNOTATED_CDS"/>
    <property type="molecule type" value="Genomic_DNA"/>
</dbReference>
<dbReference type="EMBL" id="BC016029">
    <property type="protein sequence ID" value="AAH16029.1"/>
    <property type="molecule type" value="mRNA"/>
</dbReference>
<dbReference type="CCDS" id="CCDS845.1"/>
<dbReference type="RefSeq" id="NP_061174.1">
    <property type="nucleotide sequence ID" value="NM_018704.3"/>
</dbReference>
<dbReference type="RefSeq" id="XP_011540083.1">
    <property type="nucleotide sequence ID" value="XM_011541781.3"/>
</dbReference>
<dbReference type="RefSeq" id="XP_016857295.1">
    <property type="nucleotide sequence ID" value="XM_017001806.2"/>
</dbReference>
<dbReference type="RefSeq" id="XP_047281318.1">
    <property type="nucleotide sequence ID" value="XM_047425362.1"/>
</dbReference>
<dbReference type="RefSeq" id="XP_054193678.1">
    <property type="nucleotide sequence ID" value="XM_054337703.1"/>
</dbReference>
<dbReference type="RefSeq" id="XP_054193679.1">
    <property type="nucleotide sequence ID" value="XM_054337704.1"/>
</dbReference>
<dbReference type="RefSeq" id="XP_054193680.1">
    <property type="nucleotide sequence ID" value="XM_054337705.1"/>
</dbReference>
<dbReference type="SMR" id="Q9P2B4"/>
<dbReference type="BioGRID" id="121000">
    <property type="interactions" value="77"/>
</dbReference>
<dbReference type="CORUM" id="Q9P2B4"/>
<dbReference type="FunCoup" id="Q9P2B4">
    <property type="interactions" value="821"/>
</dbReference>
<dbReference type="IntAct" id="Q9P2B4">
    <property type="interactions" value="55"/>
</dbReference>
<dbReference type="MINT" id="Q9P2B4"/>
<dbReference type="STRING" id="9606.ENSP00000271277"/>
<dbReference type="GlyGen" id="Q9P2B4">
    <property type="glycosylation" value="4 sites, 1 O-linked glycan (2 sites)"/>
</dbReference>
<dbReference type="iPTMnet" id="Q9P2B4"/>
<dbReference type="PhosphoSitePlus" id="Q9P2B4"/>
<dbReference type="BioMuta" id="CTTNBP2NL"/>
<dbReference type="DMDM" id="92087169"/>
<dbReference type="jPOST" id="Q9P2B4"/>
<dbReference type="MassIVE" id="Q9P2B4"/>
<dbReference type="PaxDb" id="9606-ENSP00000271277"/>
<dbReference type="PeptideAtlas" id="Q9P2B4"/>
<dbReference type="ProteomicsDB" id="83766"/>
<dbReference type="Pumba" id="Q9P2B4"/>
<dbReference type="Antibodypedia" id="2021">
    <property type="antibodies" value="103 antibodies from 22 providers"/>
</dbReference>
<dbReference type="DNASU" id="55917"/>
<dbReference type="Ensembl" id="ENST00000271277.11">
    <property type="protein sequence ID" value="ENSP00000271277.6"/>
    <property type="gene ID" value="ENSG00000143079.15"/>
</dbReference>
<dbReference type="GeneID" id="55917"/>
<dbReference type="KEGG" id="hsa:55917"/>
<dbReference type="MANE-Select" id="ENST00000271277.11">
    <property type="protein sequence ID" value="ENSP00000271277.6"/>
    <property type="RefSeq nucleotide sequence ID" value="NM_018704.3"/>
    <property type="RefSeq protein sequence ID" value="NP_061174.1"/>
</dbReference>
<dbReference type="UCSC" id="uc001ebx.4">
    <property type="organism name" value="human"/>
</dbReference>
<dbReference type="AGR" id="HGNC:25330"/>
<dbReference type="CTD" id="55917"/>
<dbReference type="DisGeNET" id="55917"/>
<dbReference type="GeneCards" id="CTTNBP2NL"/>
<dbReference type="HGNC" id="HGNC:25330">
    <property type="gene designation" value="CTTNBP2NL"/>
</dbReference>
<dbReference type="HPA" id="ENSG00000143079">
    <property type="expression patterns" value="Low tissue specificity"/>
</dbReference>
<dbReference type="MIM" id="615100">
    <property type="type" value="gene"/>
</dbReference>
<dbReference type="neXtProt" id="NX_Q9P2B4"/>
<dbReference type="OpenTargets" id="ENSG00000143079"/>
<dbReference type="PharmGKB" id="PA142672062"/>
<dbReference type="VEuPathDB" id="HostDB:ENSG00000143079"/>
<dbReference type="eggNOG" id="KOG1103">
    <property type="taxonomic scope" value="Eukaryota"/>
</dbReference>
<dbReference type="GeneTree" id="ENSGT00950000182852"/>
<dbReference type="HOGENOM" id="CLU_028813_1_0_1"/>
<dbReference type="InParanoid" id="Q9P2B4"/>
<dbReference type="OMA" id="ANGHFEP"/>
<dbReference type="OrthoDB" id="6021133at2759"/>
<dbReference type="PAN-GO" id="Q9P2B4">
    <property type="GO annotations" value="3 GO annotations based on evolutionary models"/>
</dbReference>
<dbReference type="PhylomeDB" id="Q9P2B4"/>
<dbReference type="TreeFam" id="TF325130"/>
<dbReference type="PathwayCommons" id="Q9P2B4"/>
<dbReference type="SignaLink" id="Q9P2B4"/>
<dbReference type="SIGNOR" id="Q9P2B4"/>
<dbReference type="BioGRID-ORCS" id="55917">
    <property type="hits" value="11 hits in 1150 CRISPR screens"/>
</dbReference>
<dbReference type="CD-CODE" id="DEE660B4">
    <property type="entry name" value="Stress granule"/>
</dbReference>
<dbReference type="ChiTaRS" id="CTTNBP2NL">
    <property type="organism name" value="human"/>
</dbReference>
<dbReference type="GeneWiki" id="CTTNBP2NL"/>
<dbReference type="GenomeRNAi" id="55917"/>
<dbReference type="Pharos" id="Q9P2B4">
    <property type="development level" value="Tbio"/>
</dbReference>
<dbReference type="PRO" id="PR:Q9P2B4"/>
<dbReference type="Proteomes" id="UP000005640">
    <property type="component" value="Chromosome 1"/>
</dbReference>
<dbReference type="RNAct" id="Q9P2B4">
    <property type="molecule type" value="protein"/>
</dbReference>
<dbReference type="Bgee" id="ENSG00000143079">
    <property type="expression patterns" value="Expressed in secondary oocyte and 190 other cell types or tissues"/>
</dbReference>
<dbReference type="ExpressionAtlas" id="Q9P2B4">
    <property type="expression patterns" value="baseline and differential"/>
</dbReference>
<dbReference type="GO" id="GO:0015629">
    <property type="term" value="C:actin cytoskeleton"/>
    <property type="evidence" value="ECO:0000314"/>
    <property type="project" value="LIFEdb"/>
</dbReference>
<dbReference type="GO" id="GO:0005737">
    <property type="term" value="C:cytoplasm"/>
    <property type="evidence" value="ECO:0007669"/>
    <property type="project" value="UniProtKB-KW"/>
</dbReference>
<dbReference type="GO" id="GO:0090443">
    <property type="term" value="C:FAR/SIN/STRIPAK complex"/>
    <property type="evidence" value="ECO:0000314"/>
    <property type="project" value="UniProtKB"/>
</dbReference>
<dbReference type="GO" id="GO:0030027">
    <property type="term" value="C:lamellipodium"/>
    <property type="evidence" value="ECO:0007669"/>
    <property type="project" value="UniProtKB-SubCell"/>
</dbReference>
<dbReference type="GO" id="GO:0001725">
    <property type="term" value="C:stress fiber"/>
    <property type="evidence" value="ECO:0007669"/>
    <property type="project" value="UniProtKB-SubCell"/>
</dbReference>
<dbReference type="GO" id="GO:0051721">
    <property type="term" value="F:protein phosphatase 2A binding"/>
    <property type="evidence" value="ECO:0000314"/>
    <property type="project" value="MGI"/>
</dbReference>
<dbReference type="GO" id="GO:0034763">
    <property type="term" value="P:negative regulation of transmembrane transport"/>
    <property type="evidence" value="ECO:0000315"/>
    <property type="project" value="MGI"/>
</dbReference>
<dbReference type="GO" id="GO:0032410">
    <property type="term" value="P:negative regulation of transporter activity"/>
    <property type="evidence" value="ECO:0000315"/>
    <property type="project" value="MGI"/>
</dbReference>
<dbReference type="GO" id="GO:0006470">
    <property type="term" value="P:protein dephosphorylation"/>
    <property type="evidence" value="ECO:0000315"/>
    <property type="project" value="MGI"/>
</dbReference>
<dbReference type="GO" id="GO:1903119">
    <property type="term" value="P:protein localization to actin cytoskeleton"/>
    <property type="evidence" value="ECO:0000318"/>
    <property type="project" value="GO_Central"/>
</dbReference>
<dbReference type="InterPro" id="IPR050719">
    <property type="entry name" value="Cortactin-Actin_Reg"/>
</dbReference>
<dbReference type="InterPro" id="IPR019131">
    <property type="entry name" value="Cortactin-binding_p2_N"/>
</dbReference>
<dbReference type="PANTHER" id="PTHR23166:SF9">
    <property type="entry name" value="CTTNBP2 N-TERMINAL-LIKE PROTEIN"/>
    <property type="match status" value="1"/>
</dbReference>
<dbReference type="PANTHER" id="PTHR23166">
    <property type="entry name" value="FILAMIN/GPBP-INTERACTING PROTEIN"/>
    <property type="match status" value="1"/>
</dbReference>
<dbReference type="Pfam" id="PF09727">
    <property type="entry name" value="CortBP2"/>
    <property type="match status" value="1"/>
</dbReference>
<feature type="chain" id="PRO_0000226997" description="CTTNBP2 N-terminal-like protein">
    <location>
        <begin position="1"/>
        <end position="639"/>
    </location>
</feature>
<feature type="region of interest" description="Disordered" evidence="4">
    <location>
        <begin position="387"/>
        <end position="430"/>
    </location>
</feature>
<feature type="region of interest" description="Disordered" evidence="4">
    <location>
        <begin position="463"/>
        <end position="490"/>
    </location>
</feature>
<feature type="region of interest" description="Disordered" evidence="4">
    <location>
        <begin position="511"/>
        <end position="609"/>
    </location>
</feature>
<feature type="coiled-coil region" evidence="3">
    <location>
        <begin position="87"/>
        <end position="285"/>
    </location>
</feature>
<feature type="compositionally biased region" description="Low complexity" evidence="4">
    <location>
        <begin position="405"/>
        <end position="430"/>
    </location>
</feature>
<feature type="compositionally biased region" description="Low complexity" evidence="4">
    <location>
        <begin position="467"/>
        <end position="477"/>
    </location>
</feature>
<feature type="compositionally biased region" description="Polar residues" evidence="4">
    <location>
        <begin position="511"/>
        <end position="529"/>
    </location>
</feature>
<feature type="compositionally biased region" description="Low complexity" evidence="4">
    <location>
        <begin position="587"/>
        <end position="600"/>
    </location>
</feature>
<feature type="modified residue" description="Phosphoserine" evidence="13">
    <location>
        <position position="284"/>
    </location>
</feature>
<feature type="modified residue" description="Phosphoserine" evidence="13">
    <location>
        <position position="285"/>
    </location>
</feature>
<feature type="modified residue" description="Phosphoserine" evidence="10 13">
    <location>
        <position position="481"/>
    </location>
</feature>
<feature type="modified residue" description="Phosphoserine" evidence="8 10 11 12 13">
    <location>
        <position position="488"/>
    </location>
</feature>
<feature type="modified residue" description="Phosphoserine" evidence="8 10 11 13">
    <location>
        <position position="523"/>
    </location>
</feature>
<feature type="modified residue" description="Phosphoserine" evidence="10">
    <location>
        <position position="527"/>
    </location>
</feature>
<feature type="modified residue" description="Phosphoserine" evidence="9 11 12 13">
    <location>
        <position position="560"/>
    </location>
</feature>
<feature type="modified residue" description="Phosphoserine" evidence="11 12 13">
    <location>
        <position position="563"/>
    </location>
</feature>
<feature type="modified residue" description="Phosphoserine" evidence="13">
    <location>
        <position position="568"/>
    </location>
</feature>
<feature type="modified residue" description="Phosphothreonine" evidence="12">
    <location>
        <position position="570"/>
    </location>
</feature>
<feature type="modified residue" description="Phosphothreonine" evidence="10 11">
    <location>
        <position position="590"/>
    </location>
</feature>
<feature type="modified residue" description="Phosphoserine" evidence="11">
    <location>
        <position position="592"/>
    </location>
</feature>
<feature type="sequence variant" id="VAR_050925" description="In dbSNP:rs1175640.">
    <original>V</original>
    <variation>M</variation>
    <location>
        <position position="296"/>
    </location>
</feature>
<feature type="sequence variant" id="VAR_050926" description="In dbSNP:rs12137578.">
    <original>S</original>
    <variation>G</variation>
    <location>
        <position position="409"/>
    </location>
</feature>
<feature type="sequence conflict" description="In Ref. 2; BAG51087." evidence="6" ref="2">
    <original>D</original>
    <variation>V</variation>
    <location>
        <position position="38"/>
    </location>
</feature>
<protein>
    <recommendedName>
        <fullName>CTTNBP2 N-terminal-like protein</fullName>
    </recommendedName>
</protein>